<proteinExistence type="evidence at transcript level"/>
<reference key="1">
    <citation type="submission" date="2007-06" db="EMBL/GenBank/DDBJ databases">
        <authorList>
            <consortium name="NIH - Mammalian Gene Collection (MGC) project"/>
        </authorList>
    </citation>
    <scope>NUCLEOTIDE SEQUENCE [LARGE SCALE MRNA]</scope>
    <source>
        <strain>Hereford</strain>
        <tissue>Fetal skin</tissue>
    </source>
</reference>
<sequence>MSSSLGKEKDSKEKDPKAPSAKEREKEAKASGGFGKESKEKEPKTKGKDAKDGKKDSSAAQPGVAFSVDNTIKRPNPAPGTRKKSSNAEVIKELNKCREENSMRLDLSKRSIHILPSSIKELTQLTELYLYSNKLQSLPAEVGCLVNLMTLALSENSLTSLPDSLDNLKKLRMLDLRHNKLREIPSVVYRLDSLTTLYLRFNRITTVEKDIKNLSKLSMLSIRENKIKQLPAEIGELCNLITLDVAHNQLEHLPKEIGNCTQITNLDLQHNELLDLPDTIGNLSSLSRLGLRYNRLSAIPRSLAKCSALEELNLENNNISTLPESLLSSLVKLNSLTLARNCFQLYPVGGPSQFSTIYSLNMEHNRINKIPFGIFSRAKVLSKLNMKDNQLTSLPLDFGTWTSMVELNLATNQLTKIPEDVSGLVSLEVLILSNNLLKKLPHGLGNLRKLRELDLEENKLESLPNEIAYLKDLQKLVLTNNQLTTLPRGIGHLTNLTHLGLGENLLTHLPEEIGTLENLEELYLNDNPNLHSLPFELALCSKLSIMSIENCPLSHLPPQIVAGGPSFIIQFLKMQGPYRAMV</sequence>
<organism>
    <name type="scientific">Bos taurus</name>
    <name type="common">Bovine</name>
    <dbReference type="NCBI Taxonomy" id="9913"/>
    <lineage>
        <taxon>Eukaryota</taxon>
        <taxon>Metazoa</taxon>
        <taxon>Chordata</taxon>
        <taxon>Craniata</taxon>
        <taxon>Vertebrata</taxon>
        <taxon>Euteleostomi</taxon>
        <taxon>Mammalia</taxon>
        <taxon>Eutheria</taxon>
        <taxon>Laurasiatheria</taxon>
        <taxon>Artiodactyla</taxon>
        <taxon>Ruminantia</taxon>
        <taxon>Pecora</taxon>
        <taxon>Bovidae</taxon>
        <taxon>Bovinae</taxon>
        <taxon>Bos</taxon>
    </lineage>
</organism>
<gene>
    <name type="primary">SHOC2</name>
</gene>
<keyword id="KW-0963">Cytoplasm</keyword>
<keyword id="KW-0433">Leucine-rich repeat</keyword>
<keyword id="KW-0539">Nucleus</keyword>
<keyword id="KW-1185">Reference proteome</keyword>
<keyword id="KW-0677">Repeat</keyword>
<comment type="function">
    <text evidence="1">Core component of the SHOC2-MRAS-PP1c (SMP) holophosphatase complex that regulates activation of the MAPK pathway (By similarity). Acts as a scaffolding protein in the SMP complex (By similarity). The SMP complex specifically dephosphorylates the inhibitory phosphorylation at 'Ser-259' of RAF1 kinase, 'Ser-365' of BRAF kinase and 'Ser-214' of ARAF kinase, stimulating their kinase activities (By similarity). The SMP complex enhances the dephosphorylation activity and substrate specificity of PP1c (By similarity).</text>
</comment>
<comment type="subunit">
    <text evidence="1">Component of the SHOC2-MRAS-PP1c (SMP) complex consisting of SHOC2, GTP-bound M-Ras/MRAS and the catalytic subunit of protein phosphatase 1 (either PPP1CA, PPP1CB or PPP1CC) (By similarity). SHOC2 and PP1c preferably bind M-Ras/MRAS, but they also bind K-Ras/KRAS, N-Ras/NRAS and H-Ras/HRAS; these interactions are GTP-dependent and both SHOC2 and PP1c are required to form a stable complex (By similarity). Interacts with PP1c in the absence of Ras GTPases (By similarity). Interacts with M-Ras/MRAS and RAF1 (By similarity). Interacts with ERBIN; disrupts the interaction with RAF1 and Ras, preventing the activation of the Ras signaling pathway (By similarity). Interacts with LZTR1 (By similarity).</text>
</comment>
<comment type="subcellular location">
    <subcellularLocation>
        <location evidence="1">Cytoplasm</location>
    </subcellularLocation>
    <subcellularLocation>
        <location evidence="1">Nucleus</location>
    </subcellularLocation>
    <text evidence="1">Translocates from cytoplasm to nucleus upon growth factor stimulation.</text>
</comment>
<comment type="domain">
    <text evidence="1">Contains a N-terminal RVxF motif that is important for interaction with PP1c.</text>
</comment>
<comment type="domain">
    <text evidence="1">PP1c (all isoforms) binds to the concave side of SHOC2, via LRR 2-5, 8-11, and 13-18 (By similarity). M-Ras/MRAS binds to the concave side of SHOC2, via LRR 1-10, 12 and 14-16 (By similarity).</text>
</comment>
<comment type="similarity">
    <text evidence="3">Belongs to the SHOC2 family.</text>
</comment>
<evidence type="ECO:0000250" key="1">
    <source>
        <dbReference type="UniProtKB" id="Q9UQ13"/>
    </source>
</evidence>
<evidence type="ECO:0000256" key="2">
    <source>
        <dbReference type="SAM" id="MobiDB-lite"/>
    </source>
</evidence>
<evidence type="ECO:0000305" key="3"/>
<accession>A6QLV3</accession>
<dbReference type="EMBL" id="BC148097">
    <property type="protein sequence ID" value="AAI48098.1"/>
    <property type="molecule type" value="mRNA"/>
</dbReference>
<dbReference type="RefSeq" id="NP_001095413.1">
    <property type="nucleotide sequence ID" value="NM_001101943.1"/>
</dbReference>
<dbReference type="RefSeq" id="XP_005225784.1">
    <property type="nucleotide sequence ID" value="XM_005225727.5"/>
</dbReference>
<dbReference type="RefSeq" id="XP_010818331.1">
    <property type="nucleotide sequence ID" value="XM_010820029.4"/>
</dbReference>
<dbReference type="RefSeq" id="XP_059737801.1">
    <property type="nucleotide sequence ID" value="XM_059881818.1"/>
</dbReference>
<dbReference type="SMR" id="A6QLV3"/>
<dbReference type="FunCoup" id="A6QLV3">
    <property type="interactions" value="4504"/>
</dbReference>
<dbReference type="STRING" id="9913.ENSBTAP00000010138"/>
<dbReference type="PaxDb" id="9913-ENSBTAP00000010138"/>
<dbReference type="Ensembl" id="ENSBTAT00000010138.6">
    <property type="protein sequence ID" value="ENSBTAP00000010138.5"/>
    <property type="gene ID" value="ENSBTAG00000007709.7"/>
</dbReference>
<dbReference type="GeneID" id="511417"/>
<dbReference type="KEGG" id="bta:511417"/>
<dbReference type="CTD" id="8036"/>
<dbReference type="VEuPathDB" id="HostDB:ENSBTAG00000007709"/>
<dbReference type="VGNC" id="VGNC:34605">
    <property type="gene designation" value="SHOC2"/>
</dbReference>
<dbReference type="eggNOG" id="KOG0619">
    <property type="taxonomic scope" value="Eukaryota"/>
</dbReference>
<dbReference type="GeneTree" id="ENSGT00940000156270"/>
<dbReference type="HOGENOM" id="CLU_000288_18_23_1"/>
<dbReference type="InParanoid" id="A6QLV3"/>
<dbReference type="OMA" id="NQFTSYP"/>
<dbReference type="OrthoDB" id="676979at2759"/>
<dbReference type="TreeFam" id="TF315742"/>
<dbReference type="Reactome" id="R-BTA-5673000">
    <property type="pathway name" value="RAF activation"/>
</dbReference>
<dbReference type="Proteomes" id="UP000009136">
    <property type="component" value="Chromosome 26"/>
</dbReference>
<dbReference type="Bgee" id="ENSBTAG00000007709">
    <property type="expression patterns" value="Expressed in spermatid and 108 other cell types or tissues"/>
</dbReference>
<dbReference type="GO" id="GO:0005737">
    <property type="term" value="C:cytoplasm"/>
    <property type="evidence" value="ECO:0000250"/>
    <property type="project" value="UniProtKB"/>
</dbReference>
<dbReference type="GO" id="GO:0005829">
    <property type="term" value="C:cytosol"/>
    <property type="evidence" value="ECO:0007669"/>
    <property type="project" value="Ensembl"/>
</dbReference>
<dbReference type="GO" id="GO:0005654">
    <property type="term" value="C:nucleoplasm"/>
    <property type="evidence" value="ECO:0007669"/>
    <property type="project" value="Ensembl"/>
</dbReference>
<dbReference type="GO" id="GO:0005634">
    <property type="term" value="C:nucleus"/>
    <property type="evidence" value="ECO:0000250"/>
    <property type="project" value="UniProtKB"/>
</dbReference>
<dbReference type="GO" id="GO:0000164">
    <property type="term" value="C:protein phosphatase type 1 complex"/>
    <property type="evidence" value="ECO:0000250"/>
    <property type="project" value="UniProtKB"/>
</dbReference>
<dbReference type="GO" id="GO:0008157">
    <property type="term" value="F:protein phosphatase 1 binding"/>
    <property type="evidence" value="ECO:0007669"/>
    <property type="project" value="Ensembl"/>
</dbReference>
<dbReference type="GO" id="GO:0019903">
    <property type="term" value="F:protein phosphatase binding"/>
    <property type="evidence" value="ECO:0000250"/>
    <property type="project" value="UniProtKB"/>
</dbReference>
<dbReference type="GO" id="GO:0005225">
    <property type="term" value="F:volume-sensitive anion channel activity"/>
    <property type="evidence" value="ECO:0000318"/>
    <property type="project" value="GO_Central"/>
</dbReference>
<dbReference type="GO" id="GO:0140361">
    <property type="term" value="P:cyclic-GMP-AMP transmembrane import across plasma membrane"/>
    <property type="evidence" value="ECO:0000318"/>
    <property type="project" value="GO_Central"/>
</dbReference>
<dbReference type="GO" id="GO:0035556">
    <property type="term" value="P:intracellular signal transduction"/>
    <property type="evidence" value="ECO:0000318"/>
    <property type="project" value="GO_Central"/>
</dbReference>
<dbReference type="GO" id="GO:0046579">
    <property type="term" value="P:positive regulation of Ras protein signal transduction"/>
    <property type="evidence" value="ECO:0000250"/>
    <property type="project" value="UniProtKB"/>
</dbReference>
<dbReference type="GO" id="GO:0043408">
    <property type="term" value="P:regulation of MAPK cascade"/>
    <property type="evidence" value="ECO:0007669"/>
    <property type="project" value="Ensembl"/>
</dbReference>
<dbReference type="FunFam" id="3.80.10.10:FF:000115">
    <property type="entry name" value="leucine-rich repeat protein SHOC-2"/>
    <property type="match status" value="1"/>
</dbReference>
<dbReference type="FunFam" id="3.80.10.10:FF:000327">
    <property type="entry name" value="leucine-rich repeat protein SHOC-2 isoform X2"/>
    <property type="match status" value="1"/>
</dbReference>
<dbReference type="FunFam" id="3.80.10.10:FF:000407">
    <property type="entry name" value="leucine-rich repeat protein SHOC-2 isoform X2"/>
    <property type="match status" value="1"/>
</dbReference>
<dbReference type="Gene3D" id="3.80.10.10">
    <property type="entry name" value="Ribonuclease Inhibitor"/>
    <property type="match status" value="4"/>
</dbReference>
<dbReference type="InterPro" id="IPR001611">
    <property type="entry name" value="Leu-rich_rpt"/>
</dbReference>
<dbReference type="InterPro" id="IPR003591">
    <property type="entry name" value="Leu-rich_rpt_typical-subtyp"/>
</dbReference>
<dbReference type="InterPro" id="IPR032675">
    <property type="entry name" value="LRR_dom_sf"/>
</dbReference>
<dbReference type="InterPro" id="IPR050216">
    <property type="entry name" value="LRR_domain-containing"/>
</dbReference>
<dbReference type="InterPro" id="IPR055414">
    <property type="entry name" value="LRR_R13L4/SHOC2-like"/>
</dbReference>
<dbReference type="PANTHER" id="PTHR48051">
    <property type="match status" value="1"/>
</dbReference>
<dbReference type="PANTHER" id="PTHR48051:SF54">
    <property type="entry name" value="LEUCINE-RICH REPEAT-CONTAINING PROTEIN"/>
    <property type="match status" value="1"/>
</dbReference>
<dbReference type="Pfam" id="PF23598">
    <property type="entry name" value="LRR_14"/>
    <property type="match status" value="2"/>
</dbReference>
<dbReference type="Pfam" id="PF13855">
    <property type="entry name" value="LRR_8"/>
    <property type="match status" value="1"/>
</dbReference>
<dbReference type="SMART" id="SM00364">
    <property type="entry name" value="LRR_BAC"/>
    <property type="match status" value="12"/>
</dbReference>
<dbReference type="SMART" id="SM00365">
    <property type="entry name" value="LRR_SD22"/>
    <property type="match status" value="6"/>
</dbReference>
<dbReference type="SMART" id="SM00369">
    <property type="entry name" value="LRR_TYP"/>
    <property type="match status" value="16"/>
</dbReference>
<dbReference type="SUPFAM" id="SSF52058">
    <property type="entry name" value="L domain-like"/>
    <property type="match status" value="2"/>
</dbReference>
<dbReference type="PROSITE" id="PS51450">
    <property type="entry name" value="LRR"/>
    <property type="match status" value="17"/>
</dbReference>
<protein>
    <recommendedName>
        <fullName>Leucine-rich repeat protein SHOC-2</fullName>
    </recommendedName>
    <alternativeName>
        <fullName>Protein soc-2 homolog</fullName>
    </alternativeName>
    <alternativeName>
        <fullName>Protein sur-8 homolog</fullName>
    </alternativeName>
</protein>
<name>SHOC2_BOVIN</name>
<feature type="chain" id="PRO_0000317420" description="Leucine-rich repeat protein SHOC-2">
    <location>
        <begin position="1"/>
        <end position="582"/>
    </location>
</feature>
<feature type="repeat" description="LRR 1" evidence="1">
    <location>
        <begin position="101"/>
        <end position="122"/>
    </location>
</feature>
<feature type="repeat" description="LRR 2" evidence="1">
    <location>
        <begin position="124"/>
        <end position="145"/>
    </location>
</feature>
<feature type="repeat" description="LRR 3" evidence="1">
    <location>
        <begin position="147"/>
        <end position="169"/>
    </location>
</feature>
<feature type="repeat" description="LRR 4" evidence="1">
    <location>
        <begin position="170"/>
        <end position="191"/>
    </location>
</feature>
<feature type="repeat" description="LRR 5" evidence="1">
    <location>
        <begin position="193"/>
        <end position="214"/>
    </location>
</feature>
<feature type="repeat" description="LRR 6" evidence="1">
    <location>
        <begin position="216"/>
        <end position="237"/>
    </location>
</feature>
<feature type="repeat" description="LRR 7" evidence="1">
    <location>
        <begin position="239"/>
        <end position="260"/>
    </location>
</feature>
<feature type="repeat" description="LRR 8" evidence="1">
    <location>
        <begin position="262"/>
        <end position="283"/>
    </location>
</feature>
<feature type="repeat" description="LRR 9" evidence="1">
    <location>
        <begin position="285"/>
        <end position="307"/>
    </location>
</feature>
<feature type="repeat" description="LRR 10" evidence="1">
    <location>
        <begin position="308"/>
        <end position="329"/>
    </location>
</feature>
<feature type="repeat" description="LRR 11" evidence="1">
    <location>
        <begin position="332"/>
        <end position="353"/>
    </location>
</feature>
<feature type="repeat" description="LRR 12" evidence="1">
    <location>
        <begin position="356"/>
        <end position="377"/>
    </location>
</feature>
<feature type="repeat" description="LRR 13" evidence="1">
    <location>
        <begin position="380"/>
        <end position="400"/>
    </location>
</feature>
<feature type="repeat" description="LRR 14" evidence="1">
    <location>
        <begin position="403"/>
        <end position="424"/>
    </location>
</feature>
<feature type="repeat" description="LRR 15" evidence="1">
    <location>
        <begin position="426"/>
        <end position="448"/>
    </location>
</feature>
<feature type="repeat" description="LRR 16" evidence="1">
    <location>
        <begin position="449"/>
        <end position="470"/>
    </location>
</feature>
<feature type="repeat" description="LRR 17" evidence="1">
    <location>
        <begin position="472"/>
        <end position="494"/>
    </location>
</feature>
<feature type="repeat" description="LRR 18" evidence="1">
    <location>
        <begin position="495"/>
        <end position="516"/>
    </location>
</feature>
<feature type="repeat" description="LRR 19" evidence="1">
    <location>
        <begin position="518"/>
        <end position="540"/>
    </location>
</feature>
<feature type="repeat" description="LRR 20" evidence="1">
    <location>
        <begin position="542"/>
        <end position="563"/>
    </location>
</feature>
<feature type="region of interest" description="Disordered" evidence="2">
    <location>
        <begin position="1"/>
        <end position="88"/>
    </location>
</feature>
<feature type="short sequence motif" description="RVxF motif; important for interaction with PP1c" evidence="1">
    <location>
        <begin position="63"/>
        <end position="66"/>
    </location>
</feature>
<feature type="compositionally biased region" description="Basic and acidic residues" evidence="2">
    <location>
        <begin position="1"/>
        <end position="29"/>
    </location>
</feature>
<feature type="compositionally biased region" description="Basic and acidic residues" evidence="2">
    <location>
        <begin position="36"/>
        <end position="57"/>
    </location>
</feature>